<proteinExistence type="evidence at protein level"/>
<dbReference type="EMBL" id="M34054">
    <property type="protein sequence ID" value="AAA37038.1"/>
    <property type="molecule type" value="mRNA"/>
</dbReference>
<dbReference type="PIR" id="A37156">
    <property type="entry name" value="C3GP"/>
</dbReference>
<dbReference type="RefSeq" id="NP_001166374.1">
    <property type="nucleotide sequence ID" value="NM_001172903.1"/>
</dbReference>
<dbReference type="SMR" id="P12387"/>
<dbReference type="FunCoup" id="P12387">
    <property type="interactions" value="709"/>
</dbReference>
<dbReference type="STRING" id="10141.ENSCPOP00000018087"/>
<dbReference type="MEROPS" id="I39.950"/>
<dbReference type="MEROPS" id="S01.236"/>
<dbReference type="GlyCosmos" id="P12387">
    <property type="glycosylation" value="2 sites, No reported glycans"/>
</dbReference>
<dbReference type="ABCD" id="P12387">
    <property type="antibodies" value="6 sequenced antibodies"/>
</dbReference>
<dbReference type="GeneID" id="100135462"/>
<dbReference type="KEGG" id="cpoc:100135462"/>
<dbReference type="CTD" id="718"/>
<dbReference type="eggNOG" id="KOG1366">
    <property type="taxonomic scope" value="Eukaryota"/>
</dbReference>
<dbReference type="InParanoid" id="P12387"/>
<dbReference type="OrthoDB" id="6359008at2759"/>
<dbReference type="Proteomes" id="UP000005447">
    <property type="component" value="Unassembled WGS sequence"/>
</dbReference>
<dbReference type="GO" id="GO:0005615">
    <property type="term" value="C:extracellular space"/>
    <property type="evidence" value="ECO:0007669"/>
    <property type="project" value="InterPro"/>
</dbReference>
<dbReference type="GO" id="GO:0031715">
    <property type="term" value="F:C5L2 anaphylatoxin chemotactic receptor binding"/>
    <property type="evidence" value="ECO:0000250"/>
    <property type="project" value="UniProtKB"/>
</dbReference>
<dbReference type="GO" id="GO:0004866">
    <property type="term" value="F:endopeptidase inhibitor activity"/>
    <property type="evidence" value="ECO:0007669"/>
    <property type="project" value="InterPro"/>
</dbReference>
<dbReference type="GO" id="GO:0006957">
    <property type="term" value="P:complement activation, alternative pathway"/>
    <property type="evidence" value="ECO:0007669"/>
    <property type="project" value="UniProtKB-KW"/>
</dbReference>
<dbReference type="GO" id="GO:0006958">
    <property type="term" value="P:complement activation, classical pathway"/>
    <property type="evidence" value="ECO:0007669"/>
    <property type="project" value="UniProtKB-KW"/>
</dbReference>
<dbReference type="GO" id="GO:0006954">
    <property type="term" value="P:inflammatory response"/>
    <property type="evidence" value="ECO:0007669"/>
    <property type="project" value="UniProtKB-KW"/>
</dbReference>
<dbReference type="GO" id="GO:0010828">
    <property type="term" value="P:positive regulation of D-glucose transmembrane transport"/>
    <property type="evidence" value="ECO:0000250"/>
    <property type="project" value="UniProtKB"/>
</dbReference>
<dbReference type="GO" id="GO:0045745">
    <property type="term" value="P:positive regulation of G protein-coupled receptor signaling pathway"/>
    <property type="evidence" value="ECO:0000250"/>
    <property type="project" value="UniProtKB"/>
</dbReference>
<dbReference type="GO" id="GO:0010884">
    <property type="term" value="P:positive regulation of lipid storage"/>
    <property type="evidence" value="ECO:0000250"/>
    <property type="project" value="UniProtKB"/>
</dbReference>
<dbReference type="GO" id="GO:0001934">
    <property type="term" value="P:positive regulation of protein phosphorylation"/>
    <property type="evidence" value="ECO:0000250"/>
    <property type="project" value="UniProtKB"/>
</dbReference>
<dbReference type="GO" id="GO:0010866">
    <property type="term" value="P:regulation of triglyceride biosynthetic process"/>
    <property type="evidence" value="ECO:0000250"/>
    <property type="project" value="UniProtKB"/>
</dbReference>
<dbReference type="CDD" id="cd00017">
    <property type="entry name" value="ANATO"/>
    <property type="match status" value="1"/>
</dbReference>
<dbReference type="CDD" id="cd02896">
    <property type="entry name" value="complement_C3_C4_C5"/>
    <property type="match status" value="1"/>
</dbReference>
<dbReference type="CDD" id="cd03583">
    <property type="entry name" value="NTR_complement_C3"/>
    <property type="match status" value="1"/>
</dbReference>
<dbReference type="FunFam" id="1.20.91.20:FF:000001">
    <property type="entry name" value="Complement C3"/>
    <property type="match status" value="1"/>
</dbReference>
<dbReference type="FunFam" id="1.50.10.20:FF:000008">
    <property type="entry name" value="Complement C3"/>
    <property type="match status" value="1"/>
</dbReference>
<dbReference type="FunFam" id="2.20.130.20:FF:000001">
    <property type="entry name" value="Complement C3"/>
    <property type="match status" value="1"/>
</dbReference>
<dbReference type="FunFam" id="2.40.50.120:FF:000013">
    <property type="entry name" value="Complement C3"/>
    <property type="match status" value="1"/>
</dbReference>
<dbReference type="FunFam" id="2.60.40.10:FF:001013">
    <property type="entry name" value="Complement C3"/>
    <property type="match status" value="1"/>
</dbReference>
<dbReference type="FunFam" id="2.60.40.1930:FF:000006">
    <property type="entry name" value="Complement C3"/>
    <property type="match status" value="1"/>
</dbReference>
<dbReference type="FunFam" id="2.60.40.1930:FF:000008">
    <property type="entry name" value="Complement C3"/>
    <property type="match status" value="1"/>
</dbReference>
<dbReference type="FunFam" id="2.60.40.690:FF:000004">
    <property type="entry name" value="Complement C3"/>
    <property type="match status" value="1"/>
</dbReference>
<dbReference type="FunFam" id="6.20.50.160:FF:000003">
    <property type="entry name" value="Complement C3"/>
    <property type="match status" value="1"/>
</dbReference>
<dbReference type="FunFam" id="2.60.40.10:FF:000155">
    <property type="entry name" value="complement C3 isoform X1"/>
    <property type="match status" value="1"/>
</dbReference>
<dbReference type="FunFam" id="2.60.40.1940:FF:000001">
    <property type="entry name" value="Complement component C3"/>
    <property type="match status" value="1"/>
</dbReference>
<dbReference type="Gene3D" id="1.50.10.20">
    <property type="match status" value="1"/>
</dbReference>
<dbReference type="Gene3D" id="2.20.130.20">
    <property type="match status" value="1"/>
</dbReference>
<dbReference type="Gene3D" id="2.40.50.120">
    <property type="match status" value="1"/>
</dbReference>
<dbReference type="Gene3D" id="2.60.120.1540">
    <property type="match status" value="1"/>
</dbReference>
<dbReference type="Gene3D" id="2.60.40.1930">
    <property type="match status" value="3"/>
</dbReference>
<dbReference type="Gene3D" id="2.60.40.1940">
    <property type="match status" value="1"/>
</dbReference>
<dbReference type="Gene3D" id="6.20.50.160">
    <property type="match status" value="1"/>
</dbReference>
<dbReference type="Gene3D" id="2.60.40.690">
    <property type="entry name" value="Alpha-macroglobulin, receptor-binding domain"/>
    <property type="match status" value="1"/>
</dbReference>
<dbReference type="Gene3D" id="1.20.91.20">
    <property type="entry name" value="Anaphylotoxins (complement system)"/>
    <property type="match status" value="1"/>
</dbReference>
<dbReference type="Gene3D" id="2.60.40.10">
    <property type="entry name" value="Immunoglobulins"/>
    <property type="match status" value="2"/>
</dbReference>
<dbReference type="InterPro" id="IPR009048">
    <property type="entry name" value="A-macroglobulin_rcpt-bd"/>
</dbReference>
<dbReference type="InterPro" id="IPR036595">
    <property type="entry name" value="A-macroglobulin_rcpt-bd_sf"/>
</dbReference>
<dbReference type="InterPro" id="IPR050473">
    <property type="entry name" value="A2M/Complement_sys"/>
</dbReference>
<dbReference type="InterPro" id="IPR011625">
    <property type="entry name" value="A2M_N_BRD"/>
</dbReference>
<dbReference type="InterPro" id="IPR047565">
    <property type="entry name" value="Alpha-macroglob_thiol-ester_cl"/>
</dbReference>
<dbReference type="InterPro" id="IPR011626">
    <property type="entry name" value="Alpha-macroglobulin_TED"/>
</dbReference>
<dbReference type="InterPro" id="IPR000020">
    <property type="entry name" value="Anaphylatoxin/fibulin"/>
</dbReference>
<dbReference type="InterPro" id="IPR018081">
    <property type="entry name" value="Anaphylatoxin_comp_syst"/>
</dbReference>
<dbReference type="InterPro" id="IPR001840">
    <property type="entry name" value="Anaphylatoxn_comp_syst_dom"/>
</dbReference>
<dbReference type="InterPro" id="IPR041425">
    <property type="entry name" value="C3/4/5_MG1"/>
</dbReference>
<dbReference type="InterPro" id="IPR049466">
    <property type="entry name" value="C3_CUB1"/>
</dbReference>
<dbReference type="InterPro" id="IPR048848">
    <property type="entry name" value="C3_CUB2"/>
</dbReference>
<dbReference type="InterPro" id="IPR013783">
    <property type="entry name" value="Ig-like_fold"/>
</dbReference>
<dbReference type="InterPro" id="IPR001599">
    <property type="entry name" value="Macroglobln_a2"/>
</dbReference>
<dbReference type="InterPro" id="IPR019742">
    <property type="entry name" value="MacrogloblnA2_CS"/>
</dbReference>
<dbReference type="InterPro" id="IPR002890">
    <property type="entry name" value="MG2"/>
</dbReference>
<dbReference type="InterPro" id="IPR041555">
    <property type="entry name" value="MG3"/>
</dbReference>
<dbReference type="InterPro" id="IPR040839">
    <property type="entry name" value="MG4"/>
</dbReference>
<dbReference type="InterPro" id="IPR001134">
    <property type="entry name" value="Netrin_domain"/>
</dbReference>
<dbReference type="InterPro" id="IPR018933">
    <property type="entry name" value="Netrin_module_non-TIMP"/>
</dbReference>
<dbReference type="InterPro" id="IPR035815">
    <property type="entry name" value="NTR_complement_C3"/>
</dbReference>
<dbReference type="InterPro" id="IPR008930">
    <property type="entry name" value="Terpenoid_cyclase/PrenylTrfase"/>
</dbReference>
<dbReference type="InterPro" id="IPR008993">
    <property type="entry name" value="TIMP-like_OB-fold"/>
</dbReference>
<dbReference type="PANTHER" id="PTHR11412:SF81">
    <property type="entry name" value="COMPLEMENT C3"/>
    <property type="match status" value="1"/>
</dbReference>
<dbReference type="PANTHER" id="PTHR11412">
    <property type="entry name" value="MACROGLOBULIN / COMPLEMENT"/>
    <property type="match status" value="1"/>
</dbReference>
<dbReference type="Pfam" id="PF00207">
    <property type="entry name" value="A2M"/>
    <property type="match status" value="1"/>
</dbReference>
<dbReference type="Pfam" id="PF07703">
    <property type="entry name" value="A2M_BRD"/>
    <property type="match status" value="1"/>
</dbReference>
<dbReference type="Pfam" id="PF07677">
    <property type="entry name" value="A2M_recep"/>
    <property type="match status" value="1"/>
</dbReference>
<dbReference type="Pfam" id="PF01821">
    <property type="entry name" value="ANATO"/>
    <property type="match status" value="1"/>
</dbReference>
<dbReference type="Pfam" id="PF21406">
    <property type="entry name" value="C3_CUB1"/>
    <property type="match status" value="1"/>
</dbReference>
<dbReference type="Pfam" id="PF21308">
    <property type="entry name" value="C3_CUB2"/>
    <property type="match status" value="1"/>
</dbReference>
<dbReference type="Pfam" id="PF17790">
    <property type="entry name" value="MG1"/>
    <property type="match status" value="1"/>
</dbReference>
<dbReference type="Pfam" id="PF01835">
    <property type="entry name" value="MG2"/>
    <property type="match status" value="1"/>
</dbReference>
<dbReference type="Pfam" id="PF17791">
    <property type="entry name" value="MG3"/>
    <property type="match status" value="1"/>
</dbReference>
<dbReference type="Pfam" id="PF17789">
    <property type="entry name" value="MG4"/>
    <property type="match status" value="1"/>
</dbReference>
<dbReference type="Pfam" id="PF01759">
    <property type="entry name" value="NTR"/>
    <property type="match status" value="1"/>
</dbReference>
<dbReference type="Pfam" id="PF07678">
    <property type="entry name" value="TED_complement"/>
    <property type="match status" value="1"/>
</dbReference>
<dbReference type="PRINTS" id="PR00004">
    <property type="entry name" value="ANAPHYLATOXN"/>
</dbReference>
<dbReference type="SFLD" id="SFLDG01179">
    <property type="entry name" value="Complement_C3/C4_Like"/>
    <property type="match status" value="1"/>
</dbReference>
<dbReference type="SMART" id="SM01360">
    <property type="entry name" value="A2M"/>
    <property type="match status" value="1"/>
</dbReference>
<dbReference type="SMART" id="SM01359">
    <property type="entry name" value="A2M_N_2"/>
    <property type="match status" value="1"/>
</dbReference>
<dbReference type="SMART" id="SM01361">
    <property type="entry name" value="A2M_recep"/>
    <property type="match status" value="1"/>
</dbReference>
<dbReference type="SMART" id="SM00104">
    <property type="entry name" value="ANATO"/>
    <property type="match status" value="1"/>
</dbReference>
<dbReference type="SMART" id="SM00643">
    <property type="entry name" value="C345C"/>
    <property type="match status" value="1"/>
</dbReference>
<dbReference type="SMART" id="SM01419">
    <property type="entry name" value="Thiol-ester_cl"/>
    <property type="match status" value="1"/>
</dbReference>
<dbReference type="SUPFAM" id="SSF49410">
    <property type="entry name" value="Alpha-macroglobulin receptor domain"/>
    <property type="match status" value="1"/>
</dbReference>
<dbReference type="SUPFAM" id="SSF47686">
    <property type="entry name" value="Anaphylotoxins (complement system)"/>
    <property type="match status" value="1"/>
</dbReference>
<dbReference type="SUPFAM" id="SSF48239">
    <property type="entry name" value="Terpenoid cyclases/Protein prenyltransferases"/>
    <property type="match status" value="1"/>
</dbReference>
<dbReference type="SUPFAM" id="SSF50242">
    <property type="entry name" value="TIMP-like"/>
    <property type="match status" value="1"/>
</dbReference>
<dbReference type="PROSITE" id="PS00477">
    <property type="entry name" value="ALPHA_2_MACROGLOBULIN"/>
    <property type="match status" value="1"/>
</dbReference>
<dbReference type="PROSITE" id="PS01177">
    <property type="entry name" value="ANAPHYLATOXIN_1"/>
    <property type="match status" value="1"/>
</dbReference>
<dbReference type="PROSITE" id="PS01178">
    <property type="entry name" value="ANAPHYLATOXIN_2"/>
    <property type="match status" value="1"/>
</dbReference>
<dbReference type="PROSITE" id="PS50189">
    <property type="entry name" value="NTR"/>
    <property type="match status" value="1"/>
</dbReference>
<protein>
    <recommendedName>
        <fullName>Complement C3</fullName>
    </recommendedName>
    <component>
        <recommendedName>
            <fullName>Complement C3 beta chain</fullName>
        </recommendedName>
    </component>
    <component>
        <recommendedName>
            <fullName>C3-beta-c</fullName>
            <shortName>C3bc</shortName>
        </recommendedName>
    </component>
    <component>
        <recommendedName>
            <fullName>Complement C3 alpha chain</fullName>
        </recommendedName>
    </component>
    <component>
        <recommendedName>
            <fullName>C3a anaphylatoxin</fullName>
        </recommendedName>
    </component>
    <component>
        <recommendedName>
            <fullName>Acylation stimulating protein</fullName>
            <shortName>ASP</shortName>
        </recommendedName>
        <alternativeName>
            <fullName>C3adesArg</fullName>
        </alternativeName>
    </component>
    <component>
        <recommendedName>
            <fullName>Complement C3b</fullName>
        </recommendedName>
        <alternativeName>
            <fullName>Complement C3b-alpha' chain</fullName>
        </alternativeName>
    </component>
    <component>
        <recommendedName>
            <fullName>Complement C3c alpha' chain fragment 1</fullName>
        </recommendedName>
    </component>
    <component>
        <recommendedName>
            <fullName>Complement C3dg fragment</fullName>
        </recommendedName>
    </component>
    <component>
        <recommendedName>
            <fullName>Complement C3g fragment</fullName>
        </recommendedName>
    </component>
    <component>
        <recommendedName>
            <fullName>Complement C3d fragment</fullName>
        </recommendedName>
    </component>
    <component>
        <recommendedName>
            <fullName>Complement C3f fragment</fullName>
        </recommendedName>
    </component>
    <component>
        <recommendedName>
            <fullName>Complement C3c alpha' chain fragment 2</fullName>
        </recommendedName>
    </component>
</protein>
<name>CO3_CAVPO</name>
<feature type="signal peptide" evidence="7 8">
    <location>
        <begin position="1"/>
        <end position="22"/>
    </location>
</feature>
<feature type="chain" id="PRO_0000005901" description="Complement C3">
    <location>
        <begin position="23"/>
        <end position="1666"/>
    </location>
</feature>
<feature type="chain" id="PRO_0000005902" description="Complement C3 beta chain">
    <location>
        <begin position="23"/>
        <end position="671"/>
    </location>
</feature>
<feature type="chain" id="PRO_0000430429" description="C3-beta-c" evidence="2">
    <location>
        <begin position="567"/>
        <end position="665"/>
    </location>
</feature>
<feature type="chain" id="PRO_0000005903" description="Complement C3 alpha chain">
    <location>
        <begin position="676"/>
        <end position="1666"/>
    </location>
</feature>
<feature type="chain" id="PRO_0000005904" description="C3a anaphylatoxin">
    <location>
        <begin position="676"/>
        <end position="753"/>
    </location>
</feature>
<feature type="chain" id="PRO_0000462533" description="Acylation stimulating protein" evidence="1">
    <location>
        <begin position="676"/>
        <end position="752"/>
    </location>
</feature>
<feature type="chain" id="PRO_0000005905" description="Complement C3b">
    <location>
        <begin position="754"/>
        <end position="1666"/>
    </location>
</feature>
<feature type="chain" id="PRO_0000273943" description="Complement C3c alpha' chain fragment 1" evidence="1">
    <location>
        <begin position="754"/>
        <end position="964"/>
    </location>
</feature>
<feature type="chain" id="PRO_0000273944" description="Complement C3dg fragment" evidence="1">
    <location>
        <begin position="965"/>
        <end position="1308"/>
    </location>
</feature>
<feature type="chain" id="PRO_0000273945" description="Complement C3g fragment" evidence="1">
    <location>
        <begin position="965"/>
        <end position="1006"/>
    </location>
</feature>
<feature type="chain" id="PRO_0000005906" description="Complement C3d fragment" evidence="1">
    <location>
        <begin position="1007"/>
        <end position="1308"/>
    </location>
</feature>
<feature type="peptide" id="PRO_0000273946" description="Complement C3f fragment" evidence="1">
    <location>
        <begin position="1309"/>
        <end position="1325"/>
    </location>
</feature>
<feature type="chain" id="PRO_0000273947" description="Complement C3c alpha' chain fragment 2" evidence="1">
    <location>
        <begin position="1326"/>
        <end position="1666"/>
    </location>
</feature>
<feature type="domain" description="Anaphylatoxin-like" evidence="4">
    <location>
        <begin position="698"/>
        <end position="733"/>
    </location>
</feature>
<feature type="domain" description="NTR" evidence="5">
    <location>
        <begin position="1522"/>
        <end position="1664"/>
    </location>
</feature>
<feature type="region of interest" description="Interaction with CFP/properdin" evidence="1">
    <location>
        <begin position="1637"/>
        <end position="1662"/>
    </location>
</feature>
<feature type="site" description="Cleavage; by C3 convertase">
    <location>
        <begin position="753"/>
        <end position="754"/>
    </location>
</feature>
<feature type="site" description="Cleavage; by factor I" evidence="1">
    <location>
        <begin position="964"/>
        <end position="965"/>
    </location>
</feature>
<feature type="site" description="Cleavage; by elastase" evidence="8">
    <location>
        <begin position="992"/>
        <end position="993"/>
    </location>
</feature>
<feature type="site" description="Cleavage; by factor I" evidence="1">
    <location>
        <begin position="1308"/>
        <end position="1309"/>
    </location>
</feature>
<feature type="site" description="Cleavage; by factor I" evidence="1">
    <location>
        <begin position="1325"/>
        <end position="1326"/>
    </location>
</feature>
<feature type="site" description="Coordinates Mg(2+) for interaction with Complement factor B Bb fragment (CFB)" evidence="1">
    <location>
        <position position="1666"/>
    </location>
</feature>
<feature type="modified residue" description="Phosphoserine" evidence="1">
    <location>
        <position position="70"/>
    </location>
</feature>
<feature type="modified residue" description="Phosphoserine" evidence="1">
    <location>
        <position position="296"/>
    </location>
</feature>
<feature type="modified residue" description="Phosphoserine" evidence="1">
    <location>
        <position position="302"/>
    </location>
</feature>
<feature type="modified residue" description="Phosphoserine" evidence="1">
    <location>
        <position position="676"/>
    </location>
</feature>
<feature type="modified residue" description="Phosphoserine" evidence="1">
    <location>
        <position position="973"/>
    </location>
</feature>
<feature type="modified residue" description="Phosphoserine" evidence="1">
    <location>
        <position position="1326"/>
    </location>
</feature>
<feature type="modified residue" description="Phosphoserine" evidence="1">
    <location>
        <position position="1576"/>
    </location>
</feature>
<feature type="glycosylation site" description="N-linked (GlcNAc...) asparagine" evidence="3">
    <location>
        <position position="944"/>
    </location>
</feature>
<feature type="glycosylation site" description="N-linked (GlcNAc...) asparagine" evidence="3">
    <location>
        <position position="1620"/>
    </location>
</feature>
<feature type="disulfide bond" description="Interchain (between beta and alpha chains)" evidence="4 5">
    <location>
        <begin position="557"/>
        <end position="821"/>
    </location>
</feature>
<feature type="disulfide bond" evidence="1">
    <location>
        <begin position="630"/>
        <end position="666"/>
    </location>
</feature>
<feature type="disulfide bond" evidence="1">
    <location>
        <begin position="698"/>
        <end position="725"/>
    </location>
</feature>
<feature type="disulfide bond" evidence="1">
    <location>
        <begin position="699"/>
        <end position="732"/>
    </location>
</feature>
<feature type="disulfide bond" evidence="1">
    <location>
        <begin position="712"/>
        <end position="733"/>
    </location>
</feature>
<feature type="disulfide bond" evidence="1">
    <location>
        <begin position="878"/>
        <end position="1517"/>
    </location>
</feature>
<feature type="disulfide bond" evidence="1">
    <location>
        <begin position="1106"/>
        <end position="1163"/>
    </location>
</feature>
<feature type="disulfide bond" evidence="1">
    <location>
        <begin position="1363"/>
        <end position="1493"/>
    </location>
</feature>
<feature type="disulfide bond" evidence="1">
    <location>
        <begin position="1394"/>
        <end position="1462"/>
    </location>
</feature>
<feature type="disulfide bond" evidence="1">
    <location>
        <begin position="1510"/>
        <end position="1515"/>
    </location>
</feature>
<feature type="disulfide bond" evidence="1">
    <location>
        <begin position="1522"/>
        <end position="1593"/>
    </location>
</feature>
<feature type="disulfide bond" evidence="1">
    <location>
        <begin position="1540"/>
        <end position="1664"/>
    </location>
</feature>
<feature type="disulfide bond" evidence="1">
    <location>
        <begin position="1640"/>
        <end position="1649"/>
    </location>
</feature>
<feature type="cross-link" description="Isoglutamyl cysteine thioester (Cys-Gln)" evidence="8">
    <location>
        <begin position="1015"/>
        <end position="1018"/>
    </location>
</feature>
<feature type="sequence conflict" description="In Ref. 4; AA sequence." evidence="10" ref="4">
    <original>D</original>
    <variation>N</variation>
    <location>
        <position position="731"/>
    </location>
</feature>
<feature type="sequence conflict" description="In Ref. 3; AA sequence." evidence="10" ref="3">
    <original>Q</original>
    <variation>E</variation>
    <location>
        <position position="1018"/>
    </location>
</feature>
<accession>P12387</accession>
<reference key="1">
    <citation type="journal article" date="1990" name="J. Clin. Invest.">
        <title>Molecular basis of complement C3 deficiency in guinea pigs.</title>
        <authorList>
            <person name="Auerbach H.S."/>
            <person name="Burger R."/>
            <person name="Dodds A."/>
            <person name="Colten H.R."/>
        </authorList>
    </citation>
    <scope>NUCLEOTIDE SEQUENCE [MRNA]</scope>
    <source>
        <strain>Hartley</strain>
        <tissue>Liver</tissue>
    </source>
</reference>
<reference key="2">
    <citation type="journal article" date="1981" name="J. Biol. Chem.">
        <title>NH2-terminal structure and cleavage of guinea pig pro-C3, the precursor of the third complement component.</title>
        <authorList>
            <person name="Goldberger G."/>
            <person name="Thomas M.L."/>
            <person name="Tack B.F."/>
            <person name="Williams J."/>
            <person name="Colten H.R."/>
            <person name="Abraham G.N."/>
        </authorList>
    </citation>
    <scope>PROTEIN SEQUENCE OF 23-38</scope>
    <source>
        <tissue>Macrophage</tissue>
    </source>
</reference>
<reference key="3">
    <citation type="journal article" date="1983" name="Biochemistry">
        <title>Identification and alignment of a thiol ester site in the third component of guinea pig complement.</title>
        <authorList>
            <person name="Thomas M.L."/>
            <person name="Tack B.F."/>
        </authorList>
    </citation>
    <scope>PROTEIN SEQUENCE OF 23-38; 676-687 AND 993-1032</scope>
    <scope>THIOESTER BOND</scope>
    <source>
        <tissue>Plasma</tissue>
    </source>
</reference>
<reference key="4">
    <citation type="journal article" date="1988" name="Protein Seq. Data Anal.">
        <title>Amino acid sequence of guinea pig C3a anaphylatoxin.</title>
        <authorList>
            <person name="Gerard N.P."/>
            <person name="Lively M.O."/>
            <person name="Gerard C."/>
        </authorList>
    </citation>
    <scope>PROTEIN SEQUENCE OF 676-753</scope>
</reference>
<reference key="5">
    <citation type="journal article" date="1978" name="Cell">
        <title>C3 component of complement secreted by established cell lines.</title>
        <authorList>
            <person name="Senger D.R."/>
            <person name="Hynes R.O."/>
        </authorList>
    </citation>
    <scope>FUNCTION</scope>
    <scope>SUBUNIT</scope>
    <scope>SUBCELLULAR LOCATION</scope>
</reference>
<keyword id="KW-0165">Cleavage on pair of basic residues</keyword>
<keyword id="KW-0179">Complement alternate pathway</keyword>
<keyword id="KW-0180">Complement pathway</keyword>
<keyword id="KW-0903">Direct protein sequencing</keyword>
<keyword id="KW-1015">Disulfide bond</keyword>
<keyword id="KW-0325">Glycoprotein</keyword>
<keyword id="KW-0391">Immunity</keyword>
<keyword id="KW-0395">Inflammatory response</keyword>
<keyword id="KW-0399">Innate immunity</keyword>
<keyword id="KW-0597">Phosphoprotein</keyword>
<keyword id="KW-1185">Reference proteome</keyword>
<keyword id="KW-0964">Secreted</keyword>
<keyword id="KW-0732">Signal</keyword>
<keyword id="KW-0882">Thioester bond</keyword>
<sequence length="1666" mass="186488">MGPAAGPSLLLLLLASVSLALGDPMYSIITPNILRLENEETVVLEAHEVQGDIPVTVTVHDFPAKKNVLSSEKTVLTSATGYLGTVTIKIPASKEFKSDKGRKLVVVQAAFGGTQLEKVVLVSLQSGYLFIQTDKTIYTPGSTVLYRIFTVDSDLLPVGRTIIVTIETPDGIPIKRDTLSSNNQHGILPLSWNIPELVNMGQWKIQAFYENSPKQVFSAEFEVKEYVLPSFEVLVEPTEKFYYIDDPKGLEVNIIARFLYGKNVDGTAFVIFGVQDGDQRISLAQSLTRVVIEDGSGEVVLSRQVLLDGVQPSRPEALVGKSLYVSVTVILHSGSDMVEAERSGIPIVTSPYQIHFTKTPKYFKPAMPFEIMVLVTNPDGSPAPHVPVVTQGSNVQSLTQADGVARLSINTPNTRQPLSVTVQTKKGGIPDARQAINTMQALPYTTMYNSNNYLHLSMPRTELKPGETINVNFHLRSDPNQEAKIRYYTYLIMNKGKLLKVGRQPREPGQALVVLPMPITKELIPSFRLVAYYTLIGASAQREVVADSVWADVRDSCVGTLVVKGGSGKDGQDKRQQHLPRQQMTLRIEGNQGARVGLVAVDKGVFVLNKKHKLTQSKIWDVVEKADIGCTPGSGKDYAGVFTDAGLSFKSSKAGLQTAQREGLDCPKPAARRRRSVQLMERRMDKAGKYKSKELRRCCEDGMRENPMQFSCQRRARYVSLGEACVKAFLDCCTYMAQLRQQHRREQNLGLARSDMDEDIIPEEDIISRSQFPESWLWTIEELKEPERNGISTKTMNIFLKDSITTWEILAVSLSDKKGICVADPFEVTVMQDFFIDLRLPYSVVRNEQVEIRAVLYNYREAQSLKVRVELLHNPAFCSLATAKKRHTQTVTIGPKSSVAVPYVLVPLKIGLQEVEVKAAVYNYFISDGVKKTLKVVPEGMRVNKTVAIRTLNPEQLGQGGVQREEIPAADLSDQVPDTDSETKILLQGTPVAQMAEDAVDAERLKHLIITPSGCGEQNMIGMTPTVIAVHYLDQTEQWEKFGLEKRQEALNLINRGYTQQLAFKQPNWAYAAFKNRASSTWLTAYVVKVFSLAANLIGIDSEVLCGAVKWLILEKQKPDGVFQEDGPVIHQEMIGGVRTAQEADVSLTAFVLIALQEAKDICRAQVNNLEANINKAGDYIESRYADVRRPYTLAIAGYALALLERLNGATLQKFLNAATEKNRWEEARQKLYSVEATSYALLALLLLKDFDAVPPVVRWLNEQRYYGRGYGSTQATFMVFQALAQYQTDVPDHKDLNMEVALQLPSRSSPSKFRLVWEAGSLLRSEATKQNEGFKLTAKGKGQGTLSVVAVYYAKTKRKVVCKNFDLRVTLKPAPDTVKKPQEAKSTMILGICTRYLGDQDATMSILDISMMTGFIPDTDDLKLLATGVDRYISKYEMNKDFSKNTLIIYLDKVSHSEEECLSFKIHQFFNVGLIQPGSVKVYSYYNLDETCTQFYHPEKEDGMLNKLCHKDLCRCAEENCFIQLPEKITLDERLEKACEPGVDYVYKTKLLKMELSDDFDEYIMTIEQVIKSGSDEVQAGKERRFISHIKCRDALHLKEGKHYLMWGLSSDLWGERPNMSYIIGKDTWVEAWPEAEECQDEENQQQCQDLGTFTENMVVFGCPN</sequence>
<gene>
    <name evidence="9" type="primary">C3</name>
</gene>
<organism>
    <name type="scientific">Cavia porcellus</name>
    <name type="common">Guinea pig</name>
    <dbReference type="NCBI Taxonomy" id="10141"/>
    <lineage>
        <taxon>Eukaryota</taxon>
        <taxon>Metazoa</taxon>
        <taxon>Chordata</taxon>
        <taxon>Craniata</taxon>
        <taxon>Vertebrata</taxon>
        <taxon>Euteleostomi</taxon>
        <taxon>Mammalia</taxon>
        <taxon>Eutheria</taxon>
        <taxon>Euarchontoglires</taxon>
        <taxon>Glires</taxon>
        <taxon>Rodentia</taxon>
        <taxon>Hystricomorpha</taxon>
        <taxon>Caviidae</taxon>
        <taxon>Cavia</taxon>
    </lineage>
</organism>
<evidence type="ECO:0000250" key="1">
    <source>
        <dbReference type="UniProtKB" id="P01024"/>
    </source>
</evidence>
<evidence type="ECO:0000250" key="2">
    <source>
        <dbReference type="UniProtKB" id="P01026"/>
    </source>
</evidence>
<evidence type="ECO:0000255" key="3"/>
<evidence type="ECO:0000255" key="4">
    <source>
        <dbReference type="PROSITE-ProRule" id="PRU00022"/>
    </source>
</evidence>
<evidence type="ECO:0000255" key="5">
    <source>
        <dbReference type="PROSITE-ProRule" id="PRU00295"/>
    </source>
</evidence>
<evidence type="ECO:0000269" key="6">
    <source>
    </source>
</evidence>
<evidence type="ECO:0000269" key="7">
    <source>
    </source>
</evidence>
<evidence type="ECO:0000269" key="8">
    <source>
    </source>
</evidence>
<evidence type="ECO:0000303" key="9">
    <source>
    </source>
</evidence>
<evidence type="ECO:0000305" key="10"/>
<comment type="function">
    <text evidence="6">Precursor of non-enzymatic components of the classical, alternative, lectin and GZMK complement pathways, which consist in a cascade of proteins that leads to phagocytosis and breakdown of pathogens and signaling that strengthens the adaptive immune system.</text>
</comment>
<comment type="function">
    <molecule>Complement C3b</molecule>
    <text evidence="1">Non-enzymatic component of C5 convertase. Generated following cleavage by C3 convertase, it covalently attaches to the surface of pathogens, where it acts as an opsonin that marks the surface of antigens for removal. Complement C3b binds covalently via its reactive thioester, to cell surface carbohydrates or immune aggregates. Together with complement C4b, it then recruits the serine protease complement C2b to form the C5 convertase, which cleaves and activate C5, the next component of the complement pathways. In the alternative complement pathway, recruits the serine protease CFB to form the C5 convertase that cleaves and activates C5.</text>
</comment>
<comment type="function">
    <molecule>C3a anaphylatoxin</molecule>
    <text evidence="1">Mediator of local inflammatory process released following cleavage by C3 convertase. Acts by binding to its receptor, C3AR1, activating G protein-coupled receptor signaling, promoting the phosphorylation, ARRB2-mediated internalization and endocytosis of C3AR1. C3a anaphylatoxin stimulates the activation of immune cells such as mast cells and basophilic leukocytes to release inflammation agents, such as cytokines, chemokines and histamine, which promote inflammation development. Also acts as potent chemoattractant for the migration of macrophages and neutrophils to the inflamed tissues, resulting in neutralization of the inflammatory triggers by multiple ways, such as phagocytosis and generation of reactive oxidants.</text>
</comment>
<comment type="function">
    <molecule>Acylation stimulating protein</molecule>
    <text evidence="1">Adipogenic hormone that stimulates triglyceride synthesis and glucose transport in adipocytes, regulating fat storage and playing a role in postprandial triglyceride clearance. Appears to stimulate triglyceride synthesis via activation of the PLC, MAPK and AKT signaling pathways. Acts by binding to its receptor, C5AR2, activating G protein-coupled receptor signaling, promoting the phosphorylation, ARRB2-mediated internalization and endocytosis of C5AR2.</text>
</comment>
<comment type="function">
    <molecule>C3-beta-c</molecule>
    <text evidence="2">Acts as a chemoattractant for neutrophils in chronic inflammation.</text>
</comment>
<comment type="activity regulation">
    <text evidence="1">Complement activation is inhibited by VSIG4.</text>
</comment>
<comment type="subunit">
    <text evidence="6">In absence of complement activation, the C3 precursor is first processed by the removal of 4 Arg residues, forming two chains, beta and alpha, linked by a disulfide bond.</text>
</comment>
<comment type="subunit">
    <molecule>Complement C3b</molecule>
    <text evidence="1 6">Complement C3b is composed of complement C3b and complement C3 beta chains that are associated via disulfide bonds (PubMed:569023). Non-enzymatic component of the C5 convertase, also named C4bC2bC3b, composed of the serine protease complement C2b (C2), complement C3b, as well as complement C4b (C4). Non-enzymatic component of the C5 convertase of the alternative complement pathways composed of the serine protease complement CFB and complement C3b. Interacts with CFP; interaction takes place together with CFB in the alternative complement system and allows the complex to become active. Interacts with CR1 (via Sushi 8 and Sushi 9 domains). Interacts with CFH (By similarity).</text>
</comment>
<comment type="subunit">
    <molecule>Complement C3d fragment</molecule>
    <text evidence="1">Interacts with CFH. Interacts with CR2.</text>
</comment>
<comment type="subunit">
    <molecule>Complement C3dg fragment</molecule>
    <text evidence="1">During pregnancy, C3dg exists as a complex (probably a 2:2:2 heterohexamer) with AGT and the proform of PRG2. Interacts with CR2 (via the N-terminal Sushi domains 1 and 2).</text>
</comment>
<comment type="subcellular location">
    <subcellularLocation>
        <location evidence="6">Secreted</location>
    </subcellularLocation>
</comment>
<comment type="subcellular location">
    <molecule>Complement C3b</molecule>
    <subcellularLocation>
        <location evidence="1">Secreted</location>
    </subcellularLocation>
    <subcellularLocation>
        <location evidence="1">Cell surface</location>
    </subcellularLocation>
    <text evidence="1">Covalently associated with the surface of pathogens: the internal thioester bond reacts with carbohydrate antigens on the target surface to form amide or ester bonds.</text>
</comment>
<comment type="subcellular location">
    <molecule>C3a anaphylatoxin</molecule>
    <subcellularLocation>
        <location evidence="1">Secreted</location>
    </subcellularLocation>
</comment>
<comment type="PTM">
    <text evidence="1 6">C3 precursor is first processed by the removal of 4 Arg residues, forming two chains, beta and alpha, linked by a disulfide bond (PubMed:569023). During activation of the complement systems, the alpha chain is cleaved into C3a and C3b by the C3 convertase: C3b stays linked to the beta chain, while C3a is released in the plasma. The alpha chain is cleaved by the serine protease complement C2b component of the C3 convertase to generate C3a and C3b following activation by the classical, lectin and GZMK complement systems. The alpha chain is cleaved by CFB component of the C3 convertase to generate C3a and C3b following activation by the alternative complement system (By similarity).</text>
</comment>
<comment type="PTM">
    <molecule>C3a anaphylatoxin</molecule>
    <text evidence="1">C3a is further processed by carboxypeptidases to release the C-terminal arginine residue generating the acylation stimulating protein (ASP). Levels of ASP are increased in adipocytes in the postprandial period and by insulin and dietary chylomicrons.</text>
</comment>
<comment type="PTM">
    <molecule>Complement C3b</molecule>
    <text evidence="1">Complement C3b is rapidly split in two positions by factor I (CFI) and a cofactor (CFH) to form iC3b (inactivated C3b) and C3f which is released. CFI and CFH catalyze proteolytic degradation of already-deposited complement C3b. Then iC3b is slowly cleaved (possibly by CFI) to form C3c (beta chain + alpha' chain fragment 1 + alpha' chain fragment 2), C3dg and C3f. Other proteases produce other fragments such as C3d or C3g.</text>
</comment>
<comment type="PTM">
    <molecule>Complement C3b</molecule>
    <text evidence="1">Upon activation, the internal thioester bond reacts with carbohydrate antigens on the target surface to form amide or ester bonds, leading to covalent association with the surface of pathogens.</text>
</comment>
<comment type="PTM">
    <molecule>Complement C3b</molecule>
    <text evidence="1">Complement C3b interacts with complement C4b via a thioester linkage.</text>
</comment>
<comment type="PTM">
    <text evidence="1">Phosphorylated by FAM20C in the extracellular medium.</text>
</comment>